<evidence type="ECO:0000250" key="1"/>
<evidence type="ECO:0000250" key="2">
    <source>
        <dbReference type="UniProtKB" id="P0C0S5"/>
    </source>
</evidence>
<evidence type="ECO:0000250" key="3">
    <source>
        <dbReference type="UniProtKB" id="P16104"/>
    </source>
</evidence>
<evidence type="ECO:0000250" key="4">
    <source>
        <dbReference type="UniProtKB" id="P27661"/>
    </source>
</evidence>
<evidence type="ECO:0000256" key="5">
    <source>
        <dbReference type="SAM" id="MobiDB-lite"/>
    </source>
</evidence>
<evidence type="ECO:0000305" key="6"/>
<dbReference type="EMBL" id="BC046078">
    <property type="protein sequence ID" value="AAH46078.1"/>
    <property type="molecule type" value="mRNA"/>
</dbReference>
<dbReference type="RefSeq" id="NP_957367.1">
    <property type="nucleotide sequence ID" value="NM_201073.1"/>
</dbReference>
<dbReference type="SMR" id="Q7ZUY3"/>
<dbReference type="FunCoup" id="Q7ZUY3">
    <property type="interactions" value="1387"/>
</dbReference>
<dbReference type="STRING" id="7955.ENSDARP00000040327"/>
<dbReference type="iPTMnet" id="Q7ZUY3"/>
<dbReference type="PaxDb" id="7955-ENSDARP00000040327"/>
<dbReference type="Ensembl" id="ENSDART00000040328">
    <property type="protein sequence ID" value="ENSDARP00000040327"/>
    <property type="gene ID" value="ENSDARG00000029406"/>
</dbReference>
<dbReference type="GeneID" id="394048"/>
<dbReference type="KEGG" id="dre:394048"/>
<dbReference type="AGR" id="ZFIN:ZDB-GENE-040426-987"/>
<dbReference type="CTD" id="3014"/>
<dbReference type="ZFIN" id="ZDB-GENE-040426-987">
    <property type="gene designation" value="h2ax"/>
</dbReference>
<dbReference type="eggNOG" id="KOG1756">
    <property type="taxonomic scope" value="Eukaryota"/>
</dbReference>
<dbReference type="HOGENOM" id="CLU_062828_3_1_1"/>
<dbReference type="InParanoid" id="Q7ZUY3"/>
<dbReference type="OMA" id="HNSETHE"/>
<dbReference type="OrthoDB" id="10253031at2759"/>
<dbReference type="PhylomeDB" id="Q7ZUY3"/>
<dbReference type="TreeFam" id="TF300137"/>
<dbReference type="PRO" id="PR:Q7ZUY3"/>
<dbReference type="Proteomes" id="UP000000437">
    <property type="component" value="Chromosome 5"/>
</dbReference>
<dbReference type="Bgee" id="ENSDARG00000029406">
    <property type="expression patterns" value="Expressed in granulocyte and 27 other cell types or tissues"/>
</dbReference>
<dbReference type="GO" id="GO:0005813">
    <property type="term" value="C:centrosome"/>
    <property type="evidence" value="ECO:0000250"/>
    <property type="project" value="UniProtKB"/>
</dbReference>
<dbReference type="GO" id="GO:0005694">
    <property type="term" value="C:chromosome"/>
    <property type="evidence" value="ECO:0000250"/>
    <property type="project" value="UniProtKB"/>
</dbReference>
<dbReference type="GO" id="GO:0000786">
    <property type="term" value="C:nucleosome"/>
    <property type="evidence" value="ECO:0000318"/>
    <property type="project" value="GO_Central"/>
</dbReference>
<dbReference type="GO" id="GO:0005634">
    <property type="term" value="C:nucleus"/>
    <property type="evidence" value="ECO:0000318"/>
    <property type="project" value="GO_Central"/>
</dbReference>
<dbReference type="GO" id="GO:0003677">
    <property type="term" value="F:DNA binding"/>
    <property type="evidence" value="ECO:0007669"/>
    <property type="project" value="UniProtKB-KW"/>
</dbReference>
<dbReference type="GO" id="GO:0046982">
    <property type="term" value="F:protein heterodimerization activity"/>
    <property type="evidence" value="ECO:0007669"/>
    <property type="project" value="InterPro"/>
</dbReference>
<dbReference type="GO" id="GO:0030527">
    <property type="term" value="F:structural constituent of chromatin"/>
    <property type="evidence" value="ECO:0000318"/>
    <property type="project" value="GO_Central"/>
</dbReference>
<dbReference type="GO" id="GO:0006974">
    <property type="term" value="P:DNA damage response"/>
    <property type="evidence" value="ECO:0000314"/>
    <property type="project" value="ZFIN"/>
</dbReference>
<dbReference type="GO" id="GO:0006310">
    <property type="term" value="P:DNA recombination"/>
    <property type="evidence" value="ECO:0007669"/>
    <property type="project" value="UniProtKB-KW"/>
</dbReference>
<dbReference type="GO" id="GO:0006281">
    <property type="term" value="P:DNA repair"/>
    <property type="evidence" value="ECO:0007669"/>
    <property type="project" value="UniProtKB-KW"/>
</dbReference>
<dbReference type="GO" id="GO:0031507">
    <property type="term" value="P:heterochromatin formation"/>
    <property type="evidence" value="ECO:0000318"/>
    <property type="project" value="GO_Central"/>
</dbReference>
<dbReference type="GO" id="GO:0051321">
    <property type="term" value="P:meiotic cell cycle"/>
    <property type="evidence" value="ECO:0007669"/>
    <property type="project" value="UniProtKB-KW"/>
</dbReference>
<dbReference type="CDD" id="cd00074">
    <property type="entry name" value="HFD_H2A"/>
    <property type="match status" value="1"/>
</dbReference>
<dbReference type="FunFam" id="1.10.20.10:FF:000004">
    <property type="entry name" value="Histone H2A"/>
    <property type="match status" value="1"/>
</dbReference>
<dbReference type="Gene3D" id="1.10.20.10">
    <property type="entry name" value="Histone, subunit A"/>
    <property type="match status" value="1"/>
</dbReference>
<dbReference type="InterPro" id="IPR009072">
    <property type="entry name" value="Histone-fold"/>
</dbReference>
<dbReference type="InterPro" id="IPR002119">
    <property type="entry name" value="Histone_H2A"/>
</dbReference>
<dbReference type="InterPro" id="IPR007125">
    <property type="entry name" value="Histone_H2A/H2B/H3"/>
</dbReference>
<dbReference type="InterPro" id="IPR032454">
    <property type="entry name" value="Histone_H2A_C"/>
</dbReference>
<dbReference type="InterPro" id="IPR032458">
    <property type="entry name" value="Histone_H2A_CS"/>
</dbReference>
<dbReference type="PANTHER" id="PTHR23430">
    <property type="entry name" value="HISTONE H2A"/>
    <property type="match status" value="1"/>
</dbReference>
<dbReference type="Pfam" id="PF00125">
    <property type="entry name" value="Histone"/>
    <property type="match status" value="1"/>
</dbReference>
<dbReference type="Pfam" id="PF16211">
    <property type="entry name" value="Histone_H2A_C"/>
    <property type="match status" value="1"/>
</dbReference>
<dbReference type="PRINTS" id="PR00620">
    <property type="entry name" value="HISTONEH2A"/>
</dbReference>
<dbReference type="SMART" id="SM00414">
    <property type="entry name" value="H2A"/>
    <property type="match status" value="1"/>
</dbReference>
<dbReference type="SUPFAM" id="SSF47113">
    <property type="entry name" value="Histone-fold"/>
    <property type="match status" value="1"/>
</dbReference>
<dbReference type="PROSITE" id="PS00046">
    <property type="entry name" value="HISTONE_H2A"/>
    <property type="match status" value="1"/>
</dbReference>
<sequence length="142" mass="15001">MSGRGKTGGKARAKAKTRSSRAGLQFPVGRVHRLLRKGNYAERVGAGAPVYLAAVLEYLTAEILELAGNAARDNKKTRIIPRHLQLAVRNDEELNKLLGGVTIAQGGVLPNIQAVLLPKKTGQAAASSGKSGKKGSSQSQEY</sequence>
<keyword id="KW-0007">Acetylation</keyword>
<keyword id="KW-0131">Cell cycle</keyword>
<keyword id="KW-0158">Chromosome</keyword>
<keyword id="KW-0227">DNA damage</keyword>
<keyword id="KW-0233">DNA recombination</keyword>
<keyword id="KW-0234">DNA repair</keyword>
<keyword id="KW-0238">DNA-binding</keyword>
<keyword id="KW-1017">Isopeptide bond</keyword>
<keyword id="KW-0469">Meiosis</keyword>
<keyword id="KW-0544">Nucleosome core</keyword>
<keyword id="KW-0539">Nucleus</keyword>
<keyword id="KW-0597">Phosphoprotein</keyword>
<keyword id="KW-1185">Reference proteome</keyword>
<keyword id="KW-0832">Ubl conjugation</keyword>
<feature type="initiator methionine" description="Removed" evidence="1">
    <location>
        <position position="1"/>
    </location>
</feature>
<feature type="chain" id="PRO_0000055244" description="Histone H2AX">
    <location>
        <begin position="2"/>
        <end position="142"/>
    </location>
</feature>
<feature type="region of interest" description="Disordered" evidence="5">
    <location>
        <begin position="1"/>
        <end position="22"/>
    </location>
</feature>
<feature type="region of interest" description="Disordered" evidence="5">
    <location>
        <begin position="123"/>
        <end position="142"/>
    </location>
</feature>
<feature type="short sequence motif" description="[ST]-Q motif">
    <location>
        <begin position="139"/>
        <end position="140"/>
    </location>
</feature>
<feature type="compositionally biased region" description="Basic residues" evidence="5">
    <location>
        <begin position="7"/>
        <end position="19"/>
    </location>
</feature>
<feature type="modified residue" description="N-acetylserine" evidence="1">
    <location>
        <position position="2"/>
    </location>
</feature>
<feature type="modified residue" description="Phosphoserine" evidence="1">
    <location>
        <position position="2"/>
    </location>
</feature>
<feature type="modified residue" description="N6-lactoyllysine; alternate" evidence="2">
    <location>
        <position position="10"/>
    </location>
</feature>
<feature type="modified residue" description="Phosphoserine" evidence="1">
    <location>
        <position position="139"/>
    </location>
</feature>
<feature type="modified residue" description="Phosphotyrosine; by WSTF" evidence="1">
    <location>
        <position position="142"/>
    </location>
</feature>
<feature type="cross-link" description="Glycyl lysine isopeptide (Lys-Gly) (interchain with G-Cter in ubiquitin)" evidence="1">
    <location>
        <position position="14"/>
    </location>
</feature>
<feature type="cross-link" description="Glycyl lysine isopeptide (Lys-Gly) (interchain with G-Cter in ubiquitin)" evidence="1">
    <location>
        <position position="16"/>
    </location>
</feature>
<feature type="cross-link" description="Glycyl lysine isopeptide (Lys-Gly) (interchain with G-Cter in ubiquitin)" evidence="1">
    <location>
        <position position="120"/>
    </location>
</feature>
<organism>
    <name type="scientific">Danio rerio</name>
    <name type="common">Zebrafish</name>
    <name type="synonym">Brachydanio rerio</name>
    <dbReference type="NCBI Taxonomy" id="7955"/>
    <lineage>
        <taxon>Eukaryota</taxon>
        <taxon>Metazoa</taxon>
        <taxon>Chordata</taxon>
        <taxon>Craniata</taxon>
        <taxon>Vertebrata</taxon>
        <taxon>Euteleostomi</taxon>
        <taxon>Actinopterygii</taxon>
        <taxon>Neopterygii</taxon>
        <taxon>Teleostei</taxon>
        <taxon>Ostariophysi</taxon>
        <taxon>Cypriniformes</taxon>
        <taxon>Danionidae</taxon>
        <taxon>Danioninae</taxon>
        <taxon>Danio</taxon>
    </lineage>
</organism>
<reference key="1">
    <citation type="submission" date="2003-01" db="EMBL/GenBank/DDBJ databases">
        <authorList>
            <consortium name="NIH - Zebrafish Gene Collection (ZGC) project"/>
        </authorList>
    </citation>
    <scope>NUCLEOTIDE SEQUENCE [LARGE SCALE MRNA]</scope>
</reference>
<protein>
    <recommendedName>
        <fullName>Histone H2AX</fullName>
        <shortName>H2a/x</shortName>
    </recommendedName>
    <alternativeName>
        <fullName>Histone H2A.X</fullName>
    </alternativeName>
</protein>
<comment type="function">
    <text evidence="1">Variant histone H2A which replaces conventional H2A in a subset of nucleosomes. Nucleosomes wrap and compact DNA into chromatin, limiting DNA accessibility to the cellular machineries which require DNA as a template. Histones thereby play a central role in transcription regulation, DNA repair, DNA replication and chromosomal stability. DNA accessibility is regulated via a complex set of post-translational modifications of histones, also called histone code, and nucleosome remodeling. Required for checkpoint-mediated arrest of cell cycle progression in response to low doses of ionizing radiation and for efficient repair of DNA double strand breaks (DSBs) specifically when modified by C-terminal phosphorylation (By similarity).</text>
</comment>
<comment type="subunit">
    <text evidence="3">The nucleosome is a histone octamer containing two molecules each of H2A, H2B, H3 and H4 assembled in one H3-H4 heterotetramer and two H2A-H2B heterodimers. The octamer wraps approximately 147 bp of DNA. Interacts with numerous proteins required for DNA damage signaling and repair when phosphorylated on Ser-139 (By similarity).</text>
</comment>
<comment type="subcellular location">
    <subcellularLocation>
        <location evidence="4">Nucleus</location>
    </subcellularLocation>
    <subcellularLocation>
        <location evidence="4">Chromosome</location>
    </subcellularLocation>
</comment>
<comment type="domain">
    <text>The [ST]-Q motif constitutes a recognition sequence for kinases from the PI3/PI4-kinase family.</text>
</comment>
<comment type="PTM">
    <text evidence="3">Phosphorylated. Phosphorylation of Ser-139 (H2AX139ph) occurs in response to DNA double strand breaks (DSBs) generated by exogenous genotoxic agents, by stalled replication forks and by meiotic recombination events. Phosphorylation is dependent on the DNA damage checkpoint kinases ATR and ATM, spreads on either side of a detected DSB site and may mark the surrounding chromatin for recruitment of proteins required for DNA damage signaling and repair. Widespread phosphorylation may also serve to amplify the damage signal or aid repair of persistent lesions. Dephosphorylation of Ser-139 is required for DNA DSB repair. Phosphorylation at Tyr-142 (H2AXY142ph) by baz1b/wstf determines the relative recruitment of either DNA repair or pro-apoptotic factors. Phosphorylation at Tyr-142 (H2AXY142ph) favors the recruitment of pro-apoptosis factors. In contrast, dephosphorylation of Tyr-142 by EYA proteins (eya1, eya2, eya3 or eya4) favors the recruitment of MDC1-containing DNA repair complexes to the tail of phosphorylated Ser-139 (H2AX139ph). Phosphorylated by VRK1 (By similarity).</text>
</comment>
<comment type="PTM">
    <text evidence="1">Monoubiquitination of Lys-120 (H2AXK119ub) by ring1 and rnf2/ring2 complex gives a specific tag for epigenetic transcriptional repression. Following DNA double-strand breaks (DSBs), it is ubiquitinated through 'Lys-63' linkage of ubiquitin moieties by the E2 ligase ube2n and the E3 ligases rnf8 and rnf168, leading to the recruitment of repair proteins to sites of DNA damage. Ubiquitination at Lys-14 and Lys-16 (H2AK13Ub and H2AK15Ub, respectively) in response to DNA damage is initiated by rnf168 that mediates monoubiquitination at these 2 sites, and 'Lys-63'-linked ubiquitin are then conjugated to monoubiquitin; rnf8 is able to extend 'Lys-63'-linked ubiquitin chains in vitro. H2AK119Ub and ionizing radiation-induced 'Lys-63'-linked ubiquitination (H2AK13Ub and H2AK15Ub) are distinct events (By similarity).</text>
</comment>
<comment type="similarity">
    <text evidence="6">Belongs to the histone H2A family.</text>
</comment>
<name>H2AX_DANRE</name>
<accession>Q7ZUY3</accession>
<gene>
    <name type="primary">h2ax</name>
    <name type="ORF">zgc:56329</name>
</gene>
<proteinExistence type="evidence at transcript level"/>